<evidence type="ECO:0000255" key="1">
    <source>
        <dbReference type="HAMAP-Rule" id="MF_00079"/>
    </source>
</evidence>
<evidence type="ECO:0000305" key="2"/>
<comment type="function">
    <text evidence="1">Catalyzes the condensation of ATP and 5-phosphoribose 1-diphosphate to form N'-(5'-phosphoribosyl)-ATP (PR-ATP). Has a crucial role in the pathway because the rate of histidine biosynthesis seems to be controlled primarily by regulation of HisG enzymatic activity.</text>
</comment>
<comment type="catalytic activity">
    <reaction evidence="1">
        <text>1-(5-phospho-beta-D-ribosyl)-ATP + diphosphate = 5-phospho-alpha-D-ribose 1-diphosphate + ATP</text>
        <dbReference type="Rhea" id="RHEA:18473"/>
        <dbReference type="ChEBI" id="CHEBI:30616"/>
        <dbReference type="ChEBI" id="CHEBI:33019"/>
        <dbReference type="ChEBI" id="CHEBI:58017"/>
        <dbReference type="ChEBI" id="CHEBI:73183"/>
        <dbReference type="EC" id="2.4.2.17"/>
    </reaction>
</comment>
<comment type="cofactor">
    <cofactor evidence="1">
        <name>Mg(2+)</name>
        <dbReference type="ChEBI" id="CHEBI:18420"/>
    </cofactor>
</comment>
<comment type="activity regulation">
    <text evidence="1">Feedback inhibited by histidine.</text>
</comment>
<comment type="pathway">
    <text evidence="1">Amino-acid biosynthesis; L-histidine biosynthesis; L-histidine from 5-phospho-alpha-D-ribose 1-diphosphate: step 1/9.</text>
</comment>
<comment type="subunit">
    <text evidence="1">Equilibrium between an active dimeric form, an inactive hexameric form and higher aggregates. Interconversion between the various forms is largely reversible and is influenced by the natural substrates and inhibitors of the enzyme.</text>
</comment>
<comment type="subcellular location">
    <subcellularLocation>
        <location evidence="1">Cytoplasm</location>
    </subcellularLocation>
</comment>
<comment type="similarity">
    <text evidence="1">Belongs to the ATP phosphoribosyltransferase family. Long subfamily.</text>
</comment>
<comment type="sequence caution" evidence="2">
    <conflict type="erroneous initiation">
        <sequence resource="EMBL-CDS" id="BAA77746"/>
    </conflict>
</comment>
<proteinExistence type="inferred from homology"/>
<feature type="chain" id="PRO_0000151850" description="ATP phosphoribosyltransferase">
    <location>
        <begin position="1"/>
        <end position="299"/>
    </location>
</feature>
<protein>
    <recommendedName>
        <fullName evidence="1">ATP phosphoribosyltransferase</fullName>
        <shortName evidence="1">ATP-PRT</shortName>
        <shortName evidence="1">ATP-PRTase</shortName>
        <ecNumber evidence="1">2.4.2.17</ecNumber>
    </recommendedName>
</protein>
<accession>Q8X8T4</accession>
<accession>Q9WX46</accession>
<name>HIS1_ECO57</name>
<sequence length="299" mass="33352">MTDNTRLRIAMQKSGRLSDDSRELLARCGIKINLHTQRLIAMAENMPIDILRVRDDDIPGLVMDGVVDLGIIGENVLEEELLNRRAQGEDPRYFTLRRLDFGGCRLSLATPVDDAWDGPLSLNGKRIATSYPHLLKRYLDQKGISFKSCLLNGSVEVAPRAGLADAICDLVSTGATLEANGLREVEVIYRSKACLIQRDGEMEESKQQLIDKLLTRIQGVIQARESKYIMMHAPTQRLDEVIALLPGAERPTILPLAGDQQRVAMHMVSSETLFWETMEKLKALGASSILVLPIEKMME</sequence>
<dbReference type="EC" id="2.4.2.17" evidence="1"/>
<dbReference type="EMBL" id="AE005174">
    <property type="protein sequence ID" value="AAG57078.1"/>
    <property type="molecule type" value="Genomic_DNA"/>
</dbReference>
<dbReference type="EMBL" id="BA000007">
    <property type="protein sequence ID" value="BAB36243.1"/>
    <property type="molecule type" value="Genomic_DNA"/>
</dbReference>
<dbReference type="EMBL" id="AB008676">
    <property type="protein sequence ID" value="BAA77746.1"/>
    <property type="status" value="ALT_INIT"/>
    <property type="molecule type" value="Genomic_DNA"/>
</dbReference>
<dbReference type="PIR" id="B85827">
    <property type="entry name" value="B85827"/>
</dbReference>
<dbReference type="PIR" id="D90981">
    <property type="entry name" value="D90981"/>
</dbReference>
<dbReference type="RefSeq" id="NP_310847.1">
    <property type="nucleotide sequence ID" value="NC_002695.1"/>
</dbReference>
<dbReference type="RefSeq" id="WP_000131775.1">
    <property type="nucleotide sequence ID" value="NZ_VOAI01000013.1"/>
</dbReference>
<dbReference type="SMR" id="Q8X8T4"/>
<dbReference type="STRING" id="155864.Z3181"/>
<dbReference type="GeneID" id="912832"/>
<dbReference type="KEGG" id="ece:Z3181"/>
<dbReference type="KEGG" id="ecs:ECs_2820"/>
<dbReference type="PATRIC" id="fig|386585.9.peg.2955"/>
<dbReference type="eggNOG" id="COG0040">
    <property type="taxonomic scope" value="Bacteria"/>
</dbReference>
<dbReference type="HOGENOM" id="CLU_038115_1_0_6"/>
<dbReference type="OMA" id="YVMMDYD"/>
<dbReference type="UniPathway" id="UPA00031">
    <property type="reaction ID" value="UER00006"/>
</dbReference>
<dbReference type="Proteomes" id="UP000000558">
    <property type="component" value="Chromosome"/>
</dbReference>
<dbReference type="Proteomes" id="UP000002519">
    <property type="component" value="Chromosome"/>
</dbReference>
<dbReference type="GO" id="GO:0005737">
    <property type="term" value="C:cytoplasm"/>
    <property type="evidence" value="ECO:0007669"/>
    <property type="project" value="UniProtKB-SubCell"/>
</dbReference>
<dbReference type="GO" id="GO:0005524">
    <property type="term" value="F:ATP binding"/>
    <property type="evidence" value="ECO:0007669"/>
    <property type="project" value="UniProtKB-KW"/>
</dbReference>
<dbReference type="GO" id="GO:0003879">
    <property type="term" value="F:ATP phosphoribosyltransferase activity"/>
    <property type="evidence" value="ECO:0007669"/>
    <property type="project" value="UniProtKB-UniRule"/>
</dbReference>
<dbReference type="GO" id="GO:0000287">
    <property type="term" value="F:magnesium ion binding"/>
    <property type="evidence" value="ECO:0007669"/>
    <property type="project" value="UniProtKB-UniRule"/>
</dbReference>
<dbReference type="GO" id="GO:0000105">
    <property type="term" value="P:L-histidine biosynthetic process"/>
    <property type="evidence" value="ECO:0007669"/>
    <property type="project" value="UniProtKB-UniRule"/>
</dbReference>
<dbReference type="CDD" id="cd13592">
    <property type="entry name" value="PBP2_HisGL2"/>
    <property type="match status" value="1"/>
</dbReference>
<dbReference type="FunFam" id="3.30.70.120:FF:000002">
    <property type="entry name" value="ATP phosphoribosyltransferase"/>
    <property type="match status" value="1"/>
</dbReference>
<dbReference type="FunFam" id="3.40.190.10:FF:000008">
    <property type="entry name" value="ATP phosphoribosyltransferase"/>
    <property type="match status" value="1"/>
</dbReference>
<dbReference type="Gene3D" id="3.30.70.120">
    <property type="match status" value="1"/>
</dbReference>
<dbReference type="Gene3D" id="3.40.190.10">
    <property type="entry name" value="Periplasmic binding protein-like II"/>
    <property type="match status" value="2"/>
</dbReference>
<dbReference type="HAMAP" id="MF_00079">
    <property type="entry name" value="HisG_Long"/>
    <property type="match status" value="1"/>
</dbReference>
<dbReference type="InterPro" id="IPR020621">
    <property type="entry name" value="ATP-PRT_HisG_long"/>
</dbReference>
<dbReference type="InterPro" id="IPR013820">
    <property type="entry name" value="ATP_PRibTrfase_cat"/>
</dbReference>
<dbReference type="InterPro" id="IPR018198">
    <property type="entry name" value="ATP_PRibTrfase_CS"/>
</dbReference>
<dbReference type="InterPro" id="IPR001348">
    <property type="entry name" value="ATP_PRibTrfase_HisG"/>
</dbReference>
<dbReference type="InterPro" id="IPR013115">
    <property type="entry name" value="HisG_C"/>
</dbReference>
<dbReference type="InterPro" id="IPR011322">
    <property type="entry name" value="N-reg_PII-like_a/b"/>
</dbReference>
<dbReference type="InterPro" id="IPR015867">
    <property type="entry name" value="N-reg_PII/ATP_PRibTrfase_C"/>
</dbReference>
<dbReference type="NCBIfam" id="TIGR00070">
    <property type="entry name" value="hisG"/>
    <property type="match status" value="1"/>
</dbReference>
<dbReference type="NCBIfam" id="TIGR03455">
    <property type="entry name" value="HisG_C-term"/>
    <property type="match status" value="1"/>
</dbReference>
<dbReference type="PANTHER" id="PTHR21403:SF8">
    <property type="entry name" value="ATP PHOSPHORIBOSYLTRANSFERASE"/>
    <property type="match status" value="1"/>
</dbReference>
<dbReference type="PANTHER" id="PTHR21403">
    <property type="entry name" value="ATP PHOSPHORIBOSYLTRANSFERASE ATP-PRTASE"/>
    <property type="match status" value="1"/>
</dbReference>
<dbReference type="Pfam" id="PF01634">
    <property type="entry name" value="HisG"/>
    <property type="match status" value="1"/>
</dbReference>
<dbReference type="Pfam" id="PF08029">
    <property type="entry name" value="HisG_C"/>
    <property type="match status" value="1"/>
</dbReference>
<dbReference type="SUPFAM" id="SSF54913">
    <property type="entry name" value="GlnB-like"/>
    <property type="match status" value="1"/>
</dbReference>
<dbReference type="SUPFAM" id="SSF53850">
    <property type="entry name" value="Periplasmic binding protein-like II"/>
    <property type="match status" value="1"/>
</dbReference>
<dbReference type="PROSITE" id="PS01316">
    <property type="entry name" value="ATP_P_PHORIBOSYLTR"/>
    <property type="match status" value="1"/>
</dbReference>
<organism>
    <name type="scientific">Escherichia coli O157:H7</name>
    <dbReference type="NCBI Taxonomy" id="83334"/>
    <lineage>
        <taxon>Bacteria</taxon>
        <taxon>Pseudomonadati</taxon>
        <taxon>Pseudomonadota</taxon>
        <taxon>Gammaproteobacteria</taxon>
        <taxon>Enterobacterales</taxon>
        <taxon>Enterobacteriaceae</taxon>
        <taxon>Escherichia</taxon>
    </lineage>
</organism>
<gene>
    <name evidence="1" type="primary">hisG</name>
    <name type="ordered locus">Z3181</name>
    <name type="ordered locus">ECs2820</name>
</gene>
<keyword id="KW-0028">Amino-acid biosynthesis</keyword>
<keyword id="KW-0067">ATP-binding</keyword>
<keyword id="KW-0963">Cytoplasm</keyword>
<keyword id="KW-0328">Glycosyltransferase</keyword>
<keyword id="KW-0368">Histidine biosynthesis</keyword>
<keyword id="KW-0460">Magnesium</keyword>
<keyword id="KW-0479">Metal-binding</keyword>
<keyword id="KW-0547">Nucleotide-binding</keyword>
<keyword id="KW-1185">Reference proteome</keyword>
<keyword id="KW-0808">Transferase</keyword>
<reference key="1">
    <citation type="journal article" date="2001" name="Nature">
        <title>Genome sequence of enterohaemorrhagic Escherichia coli O157:H7.</title>
        <authorList>
            <person name="Perna N.T."/>
            <person name="Plunkett G. III"/>
            <person name="Burland V."/>
            <person name="Mau B."/>
            <person name="Glasner J.D."/>
            <person name="Rose D.J."/>
            <person name="Mayhew G.F."/>
            <person name="Evans P.S."/>
            <person name="Gregor J."/>
            <person name="Kirkpatrick H.A."/>
            <person name="Posfai G."/>
            <person name="Hackett J."/>
            <person name="Klink S."/>
            <person name="Boutin A."/>
            <person name="Shao Y."/>
            <person name="Miller L."/>
            <person name="Grotbeck E.J."/>
            <person name="Davis N.W."/>
            <person name="Lim A."/>
            <person name="Dimalanta E.T."/>
            <person name="Potamousis K."/>
            <person name="Apodaca J."/>
            <person name="Anantharaman T.S."/>
            <person name="Lin J."/>
            <person name="Yen G."/>
            <person name="Schwartz D.C."/>
            <person name="Welch R.A."/>
            <person name="Blattner F.R."/>
        </authorList>
    </citation>
    <scope>NUCLEOTIDE SEQUENCE [LARGE SCALE GENOMIC DNA]</scope>
    <source>
        <strain>O157:H7 / EDL933 / ATCC 700927 / EHEC</strain>
    </source>
</reference>
<reference key="2">
    <citation type="journal article" date="2001" name="DNA Res.">
        <title>Complete genome sequence of enterohemorrhagic Escherichia coli O157:H7 and genomic comparison with a laboratory strain K-12.</title>
        <authorList>
            <person name="Hayashi T."/>
            <person name="Makino K."/>
            <person name="Ohnishi M."/>
            <person name="Kurokawa K."/>
            <person name="Ishii K."/>
            <person name="Yokoyama K."/>
            <person name="Han C.-G."/>
            <person name="Ohtsubo E."/>
            <person name="Nakayama K."/>
            <person name="Murata T."/>
            <person name="Tanaka M."/>
            <person name="Tobe T."/>
            <person name="Iida T."/>
            <person name="Takami H."/>
            <person name="Honda T."/>
            <person name="Sasakawa C."/>
            <person name="Ogasawara N."/>
            <person name="Yasunaga T."/>
            <person name="Kuhara S."/>
            <person name="Shiba T."/>
            <person name="Hattori M."/>
            <person name="Shinagawa H."/>
        </authorList>
    </citation>
    <scope>NUCLEOTIDE SEQUENCE [LARGE SCALE GENOMIC DNA]</scope>
    <source>
        <strain>O157:H7 / Sakai / RIMD 0509952 / EHEC</strain>
    </source>
</reference>
<reference key="3">
    <citation type="journal article" date="1999" name="Microb. Pathog.">
        <title>Analysis of the genes responsible for the O-antigen synthesis in enterohaemorrhagic Escherichia coli O157.</title>
        <authorList>
            <person name="Shimizu T."/>
            <person name="Yamasaki S."/>
            <person name="Tsukamoto T."/>
            <person name="Takeda Y."/>
        </authorList>
    </citation>
    <scope>NUCLEOTIDE SEQUENCE [GENOMIC DNA] OF 90-299</scope>
    <source>
        <strain>O157:H- / 184 / EHEC</strain>
    </source>
</reference>